<feature type="signal peptide" evidence="3">
    <location>
        <begin position="1"/>
        <end position="23"/>
    </location>
</feature>
<feature type="chain" id="PRO_5004489017" description="Mannose-specific lectin CEA chain 1">
    <location>
        <begin position="24"/>
        <end position="139"/>
    </location>
</feature>
<feature type="chain" id="PRO_0000450780" description="Mannose-specific lectin CEA chain 2">
    <location>
        <begin position="140"/>
        <end position="264"/>
    </location>
</feature>
<feature type="domain" description="Bulb-type lectin 1" evidence="4">
    <location>
        <begin position="26"/>
        <end position="131"/>
    </location>
</feature>
<feature type="domain" description="Bulb-type lectin 2" evidence="4">
    <location>
        <begin position="145"/>
        <end position="252"/>
    </location>
</feature>
<feature type="short sequence motif" description="Carbohydrate-binding motif 1" evidence="9">
    <location>
        <begin position="51"/>
        <end position="59"/>
    </location>
</feature>
<feature type="short sequence motif" description="Carbohydrate-binding motif 2" evidence="9">
    <location>
        <begin position="170"/>
        <end position="178"/>
    </location>
</feature>
<feature type="binding site" evidence="1">
    <location>
        <begin position="51"/>
        <end position="55"/>
    </location>
    <ligand>
        <name>beta-D-mannose</name>
        <dbReference type="ChEBI" id="CHEBI:28563"/>
    </ligand>
</feature>
<feature type="binding site" evidence="1">
    <location>
        <position position="59"/>
    </location>
    <ligand>
        <name>beta-D-mannose</name>
        <dbReference type="ChEBI" id="CHEBI:28563"/>
    </ligand>
</feature>
<feature type="binding site" evidence="6 11">
    <location>
        <position position="63"/>
    </location>
    <ligand>
        <name>beta-D-mannose</name>
        <dbReference type="ChEBI" id="CHEBI:28563"/>
    </ligand>
</feature>
<feature type="binding site" evidence="1">
    <location>
        <position position="64"/>
    </location>
    <ligand>
        <name>beta-D-mannose</name>
        <dbReference type="ChEBI" id="CHEBI:28563"/>
    </ligand>
</feature>
<feature type="binding site" evidence="6 11">
    <location>
        <begin position="170"/>
        <end position="174"/>
    </location>
    <ligand>
        <name>beta-D-mannose</name>
        <dbReference type="ChEBI" id="CHEBI:28563"/>
    </ligand>
</feature>
<feature type="binding site" evidence="2">
    <location>
        <position position="178"/>
    </location>
    <ligand>
        <name>beta-D-mannose</name>
        <dbReference type="ChEBI" id="CHEBI:28563"/>
    </ligand>
</feature>
<feature type="binding site" evidence="2">
    <location>
        <begin position="182"/>
        <end position="185"/>
    </location>
    <ligand>
        <name>beta-D-mannose</name>
        <dbReference type="ChEBI" id="CHEBI:28563"/>
    </ligand>
</feature>
<feature type="disulfide bond" evidence="4 6 10 11">
    <location>
        <begin position="54"/>
        <end position="74"/>
    </location>
</feature>
<feature type="disulfide bond" evidence="4 6 10 11">
    <location>
        <begin position="173"/>
        <end position="195"/>
    </location>
</feature>
<feature type="strand" evidence="12">
    <location>
        <begin position="28"/>
        <end position="30"/>
    </location>
</feature>
<feature type="strand" evidence="12">
    <location>
        <begin position="39"/>
        <end position="43"/>
    </location>
</feature>
<feature type="strand" evidence="12">
    <location>
        <begin position="46"/>
        <end position="50"/>
    </location>
</feature>
<feature type="strand" evidence="12">
    <location>
        <begin position="56"/>
        <end position="59"/>
    </location>
</feature>
<feature type="turn" evidence="12">
    <location>
        <begin position="60"/>
        <end position="62"/>
    </location>
</feature>
<feature type="strand" evidence="12">
    <location>
        <begin position="75"/>
        <end position="78"/>
    </location>
</feature>
<feature type="strand" evidence="12">
    <location>
        <begin position="84"/>
        <end position="87"/>
    </location>
</feature>
<feature type="strand" evidence="12">
    <location>
        <begin position="89"/>
        <end position="91"/>
    </location>
</feature>
<feature type="strand" evidence="12">
    <location>
        <begin position="93"/>
        <end position="96"/>
    </location>
</feature>
<feature type="strand" evidence="12">
    <location>
        <begin position="102"/>
        <end position="104"/>
    </location>
</feature>
<feature type="strand" evidence="12">
    <location>
        <begin position="107"/>
        <end position="111"/>
    </location>
</feature>
<feature type="turn" evidence="12">
    <location>
        <begin position="112"/>
        <end position="114"/>
    </location>
</feature>
<feature type="strand" evidence="12">
    <location>
        <begin position="115"/>
        <end position="119"/>
    </location>
</feature>
<feature type="strand" evidence="12">
    <location>
        <begin position="121"/>
        <end position="126"/>
    </location>
</feature>
<feature type="strand" evidence="13">
    <location>
        <begin position="128"/>
        <end position="130"/>
    </location>
</feature>
<feature type="strand" evidence="12">
    <location>
        <begin position="147"/>
        <end position="149"/>
    </location>
</feature>
<feature type="strand" evidence="12">
    <location>
        <begin position="153"/>
        <end position="155"/>
    </location>
</feature>
<feature type="strand" evidence="12">
    <location>
        <begin position="158"/>
        <end position="162"/>
    </location>
</feature>
<feature type="strand" evidence="12">
    <location>
        <begin position="165"/>
        <end position="169"/>
    </location>
</feature>
<feature type="strand" evidence="12">
    <location>
        <begin position="171"/>
        <end position="173"/>
    </location>
</feature>
<feature type="strand" evidence="12">
    <location>
        <begin position="175"/>
        <end position="178"/>
    </location>
</feature>
<feature type="turn" evidence="12">
    <location>
        <begin position="180"/>
        <end position="182"/>
    </location>
</feature>
<feature type="strand" evidence="12">
    <location>
        <begin position="191"/>
        <end position="194"/>
    </location>
</feature>
<feature type="strand" evidence="12">
    <location>
        <begin position="196"/>
        <end position="199"/>
    </location>
</feature>
<feature type="strand" evidence="13">
    <location>
        <begin position="201"/>
        <end position="203"/>
    </location>
</feature>
<feature type="strand" evidence="12">
    <location>
        <begin position="205"/>
        <end position="208"/>
    </location>
</feature>
<feature type="strand" evidence="12">
    <location>
        <begin position="214"/>
        <end position="217"/>
    </location>
</feature>
<feature type="strand" evidence="12">
    <location>
        <begin position="223"/>
        <end position="225"/>
    </location>
</feature>
<feature type="strand" evidence="12">
    <location>
        <begin position="228"/>
        <end position="231"/>
    </location>
</feature>
<feature type="strand" evidence="12">
    <location>
        <begin position="237"/>
        <end position="240"/>
    </location>
</feature>
<feature type="strand" evidence="12">
    <location>
        <begin position="243"/>
        <end position="247"/>
    </location>
</feature>
<comment type="function">
    <text evidence="5">Mannose-specific lectin (Ref.1). Shows agglutinating activity towards erythrocytes from rabbit (Ref.1). Has insecticidal activity against cotton aphids and other hemipteran insects (Ref.1).</text>
</comment>
<comment type="subunit">
    <text evidence="6">Forms heterotetramer of 2 chains 1 and 2 chains 2 arranged as a dimer of chain 1 and chain 2 heterodimers.</text>
</comment>
<comment type="subcellular location">
    <subcellularLocation>
        <location evidence="8">Secreted</location>
    </subcellularLocation>
</comment>
<comment type="biotechnology">
    <text evidence="9">May be used as a potent insecticidal agent against hemipteran insects.</text>
</comment>
<protein>
    <recommendedName>
        <fullName evidence="8">Mannose-specific lectin CEA</fullName>
    </recommendedName>
    <alternativeName>
        <fullName evidence="8">Agglutinin CEA</fullName>
    </alternativeName>
    <component>
        <recommendedName>
            <fullName evidence="8">Mannose-specific lectin CEA chain 1</fullName>
        </recommendedName>
    </component>
    <component>
        <recommendedName>
            <fullName evidence="8">Mannose-specific lectin CEA chain 2</fullName>
        </recommendedName>
    </component>
</protein>
<proteinExistence type="evidence at protein level"/>
<keyword id="KW-0002">3D-structure</keyword>
<keyword id="KW-1015">Disulfide bond</keyword>
<keyword id="KW-0348">Hemagglutinin</keyword>
<keyword id="KW-0430">Lectin</keyword>
<keyword id="KW-0460">Magnesium</keyword>
<keyword id="KW-0465">Mannose-binding</keyword>
<keyword id="KW-0479">Metal-binding</keyword>
<keyword id="KW-0677">Repeat</keyword>
<keyword id="KW-0964">Secreted</keyword>
<keyword id="KW-0732">Signal</keyword>
<gene>
    <name evidence="7" type="primary">CEA</name>
</gene>
<organism>
    <name type="scientific">Colocasia esculenta</name>
    <name type="common">Wild taro</name>
    <name type="synonym">Arum esculentum</name>
    <dbReference type="NCBI Taxonomy" id="4460"/>
    <lineage>
        <taxon>Eukaryota</taxon>
        <taxon>Viridiplantae</taxon>
        <taxon>Streptophyta</taxon>
        <taxon>Embryophyta</taxon>
        <taxon>Tracheophyta</taxon>
        <taxon>Spermatophyta</taxon>
        <taxon>Magnoliopsida</taxon>
        <taxon>Liliopsida</taxon>
        <taxon>Araceae</taxon>
        <taxon>Aroideae</taxon>
        <taxon>Colocasieae</taxon>
        <taxon>Colocasia</taxon>
    </lineage>
</organism>
<accession>R9RL27</accession>
<name>CEA_COLES</name>
<dbReference type="EMBL" id="JX435122">
    <property type="protein sequence ID" value="AGM50056.1"/>
    <property type="molecule type" value="Genomic_DNA"/>
</dbReference>
<dbReference type="PDB" id="5D5G">
    <property type="method" value="X-ray"/>
    <property type="resolution" value="1.74 A"/>
    <property type="chains" value="A/C=24-132, B/D=140-250"/>
</dbReference>
<dbReference type="PDB" id="5D9Z">
    <property type="method" value="X-ray"/>
    <property type="resolution" value="1.85 A"/>
    <property type="chains" value="A=24-132, B=140-251"/>
</dbReference>
<dbReference type="PDBsum" id="5D5G"/>
<dbReference type="PDBsum" id="5D9Z"/>
<dbReference type="SMR" id="R9RL27"/>
<dbReference type="UniLectin" id="R9RL27"/>
<dbReference type="EvolutionaryTrace" id="R9RL27"/>
<dbReference type="GO" id="GO:0005576">
    <property type="term" value="C:extracellular region"/>
    <property type="evidence" value="ECO:0007669"/>
    <property type="project" value="UniProtKB-SubCell"/>
</dbReference>
<dbReference type="GO" id="GO:0005537">
    <property type="term" value="F:D-mannose binding"/>
    <property type="evidence" value="ECO:0007669"/>
    <property type="project" value="UniProtKB-KW"/>
</dbReference>
<dbReference type="GO" id="GO:0046872">
    <property type="term" value="F:metal ion binding"/>
    <property type="evidence" value="ECO:0007669"/>
    <property type="project" value="UniProtKB-KW"/>
</dbReference>
<dbReference type="GO" id="GO:0051707">
    <property type="term" value="P:response to other organism"/>
    <property type="evidence" value="ECO:0007669"/>
    <property type="project" value="UniProtKB-ARBA"/>
</dbReference>
<dbReference type="CDD" id="cd00028">
    <property type="entry name" value="B_lectin"/>
    <property type="match status" value="2"/>
</dbReference>
<dbReference type="Gene3D" id="2.90.10.10">
    <property type="entry name" value="Bulb-type lectin domain"/>
    <property type="match status" value="2"/>
</dbReference>
<dbReference type="InterPro" id="IPR001480">
    <property type="entry name" value="Bulb-type_lectin_dom"/>
</dbReference>
<dbReference type="InterPro" id="IPR036426">
    <property type="entry name" value="Bulb-type_lectin_dom_sf"/>
</dbReference>
<dbReference type="SMART" id="SM00108">
    <property type="entry name" value="B_lectin"/>
    <property type="match status" value="2"/>
</dbReference>
<dbReference type="SUPFAM" id="SSF51110">
    <property type="entry name" value="alpha-D-mannose-specific plant lectins"/>
    <property type="match status" value="2"/>
</dbReference>
<dbReference type="PROSITE" id="PS50927">
    <property type="entry name" value="BULB_LECTIN"/>
    <property type="match status" value="2"/>
</dbReference>
<reference key="1">
    <citation type="journal article" date="2013" name="Am. J. Plant Sci.">
        <title>Characterization of a highly potent insecticidal lectin from Colocasia esculenta tuber and cloning of its coding sequence.</title>
        <authorList>
            <person name="Das A."/>
            <person name="Roy A."/>
            <person name="Hess D."/>
            <person name="Das S."/>
        </authorList>
    </citation>
    <scope>NUCLEOTIDE SEQUENCE [GENOMIC DNA]</scope>
    <scope>IDENTIFICATION BY MASS SPECTROMETRY</scope>
    <scope>FUNCTION</scope>
    <scope>BIOTECHNOLOGY</scope>
</reference>
<reference key="2">
    <citation type="journal article" date="2017" name="J. Glycobiol.">
        <title>Crystal structure of Colocasia esculenta tuber agglutinin at 1.74 A resolution and its quaternary interactions.</title>
        <authorList>
            <person name="Chattopadhyaya R."/>
            <person name="Biswas H."/>
            <person name="Sarkar A."/>
        </authorList>
    </citation>
    <scope>X-RAY CRYSTALLOGRAPHY (1.74 ANGSTROMS) OF 24-132 AND 140-250 IN COMPLEX WITH BETA-D-MANNOSE</scope>
    <scope>DISULFIDE BONDS</scope>
    <scope>SUBUNIT</scope>
</reference>
<sequence length="264" mass="29134">MAKLLLFLLPAILGLLVPRSAVALGTNYLLSGQTLDREGHLKNGDFDLVMQDDCNLVLYNGNWQSNTANKGRDCKLTLTDYGELVIKNGDGSTVWRSRAQSVKGNYAAVVHPDGRLVVFGPSVFKIDPWVPGLNSLRFRNIPFTNNLLFSGQVLYGDGRLTAKSHQLVMQGDCNLVLYGGKYGWQSNTHGNGEHCFLRLNHKGELIIKDDDFKTIWSSSSSSKHGDYVLILRDDGFAVIYGPAIWETSPQAKEKMIGMVTAGKL</sequence>
<evidence type="ECO:0000250" key="1">
    <source>
        <dbReference type="UniProtKB" id="A5HMM7"/>
    </source>
</evidence>
<evidence type="ECO:0000250" key="2">
    <source>
        <dbReference type="UniProtKB" id="Q39487"/>
    </source>
</evidence>
<evidence type="ECO:0000255" key="3"/>
<evidence type="ECO:0000255" key="4">
    <source>
        <dbReference type="PROSITE-ProRule" id="PRU00038"/>
    </source>
</evidence>
<evidence type="ECO:0000269" key="5">
    <source ref="1"/>
</evidence>
<evidence type="ECO:0000269" key="6">
    <source ref="2"/>
</evidence>
<evidence type="ECO:0000303" key="7">
    <source ref="1"/>
</evidence>
<evidence type="ECO:0000305" key="8"/>
<evidence type="ECO:0000305" key="9">
    <source ref="1"/>
</evidence>
<evidence type="ECO:0007744" key="10">
    <source>
        <dbReference type="PDB" id="5D5G"/>
    </source>
</evidence>
<evidence type="ECO:0007744" key="11">
    <source>
        <dbReference type="PDB" id="5D9Z"/>
    </source>
</evidence>
<evidence type="ECO:0007829" key="12">
    <source>
        <dbReference type="PDB" id="5D5G"/>
    </source>
</evidence>
<evidence type="ECO:0007829" key="13">
    <source>
        <dbReference type="PDB" id="5D9Z"/>
    </source>
</evidence>